<comment type="function">
    <text evidence="2">Ceramide synthase that catalyzes formation of ceramide from sphinganine and acyl-CoA substrates, with high selectivity toward long and very-long chains (C18:0-C22:0) as acyl donor.</text>
</comment>
<comment type="catalytic activity">
    <reaction evidence="2">
        <text>sphinganine + octadecanoyl-CoA = N-(octadecanoyl)-sphinganine + CoA + H(+)</text>
        <dbReference type="Rhea" id="RHEA:36547"/>
        <dbReference type="ChEBI" id="CHEBI:15378"/>
        <dbReference type="ChEBI" id="CHEBI:57287"/>
        <dbReference type="ChEBI" id="CHEBI:57394"/>
        <dbReference type="ChEBI" id="CHEBI:57817"/>
        <dbReference type="ChEBI" id="CHEBI:67033"/>
    </reaction>
    <physiologicalReaction direction="left-to-right" evidence="2">
        <dbReference type="Rhea" id="RHEA:36548"/>
    </physiologicalReaction>
</comment>
<comment type="catalytic activity">
    <reaction evidence="2">
        <text>eicosanoyl-CoA + sphinganine = N-eicosanoylsphinganine + CoA + H(+)</text>
        <dbReference type="Rhea" id="RHEA:36555"/>
        <dbReference type="ChEBI" id="CHEBI:15378"/>
        <dbReference type="ChEBI" id="CHEBI:57287"/>
        <dbReference type="ChEBI" id="CHEBI:57380"/>
        <dbReference type="ChEBI" id="CHEBI:57817"/>
        <dbReference type="ChEBI" id="CHEBI:67027"/>
    </reaction>
    <physiologicalReaction direction="left-to-right" evidence="2">
        <dbReference type="Rhea" id="RHEA:36556"/>
    </physiologicalReaction>
</comment>
<comment type="catalytic activity">
    <reaction evidence="1">
        <text>docosanoyl-CoA + sphinganine = N-docosanoylsphinganine + CoA + H(+)</text>
        <dbReference type="Rhea" id="RHEA:36535"/>
        <dbReference type="ChEBI" id="CHEBI:15378"/>
        <dbReference type="ChEBI" id="CHEBI:57287"/>
        <dbReference type="ChEBI" id="CHEBI:57817"/>
        <dbReference type="ChEBI" id="CHEBI:65059"/>
        <dbReference type="ChEBI" id="CHEBI:67021"/>
    </reaction>
    <physiologicalReaction direction="left-to-right" evidence="1">
        <dbReference type="Rhea" id="RHEA:36536"/>
    </physiologicalReaction>
</comment>
<comment type="catalytic activity">
    <reaction evidence="1">
        <text>tetracosanoyl-CoA + sphinganine = N-tetracosanoylsphinganine + CoA + H(+)</text>
        <dbReference type="Rhea" id="RHEA:33591"/>
        <dbReference type="ChEBI" id="CHEBI:15378"/>
        <dbReference type="ChEBI" id="CHEBI:52961"/>
        <dbReference type="ChEBI" id="CHEBI:57287"/>
        <dbReference type="ChEBI" id="CHEBI:57817"/>
        <dbReference type="ChEBI" id="CHEBI:65052"/>
    </reaction>
    <physiologicalReaction direction="left-to-right" evidence="1">
        <dbReference type="Rhea" id="RHEA:33592"/>
    </physiologicalReaction>
</comment>
<comment type="catalytic activity">
    <reaction evidence="1">
        <text>hexacosanoyl-CoA + sphinganine = N-hexacosanoylsphinganine + CoA + H(+)</text>
        <dbReference type="Rhea" id="RHEA:33351"/>
        <dbReference type="ChEBI" id="CHEBI:15378"/>
        <dbReference type="ChEBI" id="CHEBI:52962"/>
        <dbReference type="ChEBI" id="CHEBI:57287"/>
        <dbReference type="ChEBI" id="CHEBI:57817"/>
        <dbReference type="ChEBI" id="CHEBI:64868"/>
    </reaction>
    <physiologicalReaction direction="left-to-right" evidence="1">
        <dbReference type="Rhea" id="RHEA:33352"/>
    </physiologicalReaction>
</comment>
<comment type="catalytic activity">
    <reaction evidence="1">
        <text>a fatty acyl-CoA + sphing-4-enine = an N-acylsphing-4-enine + CoA + H(+)</text>
        <dbReference type="Rhea" id="RHEA:23768"/>
        <dbReference type="ChEBI" id="CHEBI:15378"/>
        <dbReference type="ChEBI" id="CHEBI:52639"/>
        <dbReference type="ChEBI" id="CHEBI:57287"/>
        <dbReference type="ChEBI" id="CHEBI:57756"/>
        <dbReference type="ChEBI" id="CHEBI:77636"/>
        <dbReference type="EC" id="2.3.1.24"/>
    </reaction>
    <physiologicalReaction direction="left-to-right" evidence="1">
        <dbReference type="Rhea" id="RHEA:23769"/>
    </physiologicalReaction>
</comment>
<comment type="catalytic activity">
    <reaction evidence="1">
        <text>sphing-4-enine + octadecanoyl-CoA = N-octadecanoylsphing-4-enine + CoA + H(+)</text>
        <dbReference type="Rhea" id="RHEA:36691"/>
        <dbReference type="ChEBI" id="CHEBI:15378"/>
        <dbReference type="ChEBI" id="CHEBI:57287"/>
        <dbReference type="ChEBI" id="CHEBI:57394"/>
        <dbReference type="ChEBI" id="CHEBI:57756"/>
        <dbReference type="ChEBI" id="CHEBI:72961"/>
    </reaction>
    <physiologicalReaction direction="left-to-right" evidence="1">
        <dbReference type="Rhea" id="RHEA:36692"/>
    </physiologicalReaction>
</comment>
<comment type="catalytic activity">
    <reaction evidence="2">
        <text>hexadecasphinganine + octadecanoyl-CoA = N-octadecanoylhexadecasphinganine + CoA + H(+)</text>
        <dbReference type="Rhea" id="RHEA:43044"/>
        <dbReference type="ChEBI" id="CHEBI:15378"/>
        <dbReference type="ChEBI" id="CHEBI:57287"/>
        <dbReference type="ChEBI" id="CHEBI:57394"/>
        <dbReference type="ChEBI" id="CHEBI:71009"/>
        <dbReference type="ChEBI" id="CHEBI:82811"/>
    </reaction>
    <physiologicalReaction direction="left-to-right" evidence="2">
        <dbReference type="Rhea" id="RHEA:43045"/>
    </physiologicalReaction>
</comment>
<comment type="pathway">
    <text evidence="2">Lipid metabolism; sphingolipid metabolism.</text>
</comment>
<comment type="subcellular location">
    <subcellularLocation>
        <location evidence="1">Endoplasmic reticulum membrane</location>
        <topology evidence="3">Multi-pass membrane protein</topology>
    </subcellularLocation>
</comment>
<comment type="domain">
    <text evidence="2">The last loop motif confers selectivity toward stearoyl-CoA (octadecanoyl-CoA; C18:0-CoA) to behenoyl-CoA (docosanoyl-CoA; C22:0-CoA) as acyl donors.</text>
</comment>
<comment type="PTM">
    <text evidence="2">Phosphorylated at the C-terminus by CK2.</text>
</comment>
<comment type="caution">
    <text evidence="3">Some prediction bioinformatics tools predict the presence of a homeobox domain (By similarity). However, the domain is degenerate and residues that are important for DNA-binding are absent (By similarity).</text>
</comment>
<evidence type="ECO:0000250" key="1">
    <source>
        <dbReference type="UniProtKB" id="Q9D6J1"/>
    </source>
</evidence>
<evidence type="ECO:0000250" key="2">
    <source>
        <dbReference type="UniProtKB" id="Q9HA82"/>
    </source>
</evidence>
<evidence type="ECO:0000255" key="3"/>
<evidence type="ECO:0000255" key="4">
    <source>
        <dbReference type="PROSITE-ProRule" id="PRU00205"/>
    </source>
</evidence>
<evidence type="ECO:0000256" key="5">
    <source>
        <dbReference type="SAM" id="MobiDB-lite"/>
    </source>
</evidence>
<evidence type="ECO:0000305" key="6"/>
<feature type="chain" id="PRO_0000240447" description="Ceramide synthase 4">
    <location>
        <begin position="1"/>
        <end position="393"/>
    </location>
</feature>
<feature type="topological domain" description="Lumenal" evidence="2">
    <location>
        <begin position="1"/>
        <end position="31"/>
    </location>
</feature>
<feature type="transmembrane region" description="Helical" evidence="3">
    <location>
        <begin position="32"/>
        <end position="52"/>
    </location>
</feature>
<feature type="transmembrane region" description="Helical" evidence="3">
    <location>
        <begin position="140"/>
        <end position="160"/>
    </location>
</feature>
<feature type="transmembrane region" description="Helical" evidence="3">
    <location>
        <begin position="179"/>
        <end position="199"/>
    </location>
</feature>
<feature type="transmembrane region" description="Helical" evidence="3">
    <location>
        <begin position="209"/>
        <end position="229"/>
    </location>
</feature>
<feature type="transmembrane region" description="Helical" evidence="3">
    <location>
        <begin position="260"/>
        <end position="280"/>
    </location>
</feature>
<feature type="transmembrane region" description="Helical" evidence="3">
    <location>
        <begin position="304"/>
        <end position="324"/>
    </location>
</feature>
<feature type="topological domain" description="Cytoplasmic" evidence="2">
    <location>
        <begin position="325"/>
        <end position="393"/>
    </location>
</feature>
<feature type="domain" description="TLC" evidence="4">
    <location>
        <begin position="131"/>
        <end position="332"/>
    </location>
</feature>
<feature type="region of interest" description="Homeobox-like" evidence="6">
    <location>
        <begin position="67"/>
        <end position="128"/>
    </location>
</feature>
<feature type="region of interest" description="Disordered" evidence="5">
    <location>
        <begin position="346"/>
        <end position="393"/>
    </location>
</feature>
<feature type="short sequence motif" description="Last loop motif" evidence="2">
    <location>
        <begin position="291"/>
        <end position="301"/>
    </location>
</feature>
<feature type="compositionally biased region" description="Acidic residues" evidence="5">
    <location>
        <begin position="346"/>
        <end position="356"/>
    </location>
</feature>
<feature type="modified residue" description="Phosphoserine" evidence="1">
    <location>
        <position position="342"/>
    </location>
</feature>
<feature type="modified residue" description="Phosphoserine" evidence="1">
    <location>
        <position position="349"/>
    </location>
</feature>
<feature type="modified residue" description="Phosphoserine" evidence="1">
    <location>
        <position position="350"/>
    </location>
</feature>
<feature type="glycosylation site" description="N-linked (GlcNAc...) asparagine" evidence="3">
    <location>
        <position position="19"/>
    </location>
</feature>
<gene>
    <name evidence="2" type="primary">CERS4</name>
    <name evidence="2" type="synonym">LASS4</name>
</gene>
<reference key="1">
    <citation type="journal article" date="2005" name="BMC Genomics">
        <title>Characterization of 954 bovine full-CDS cDNA sequences.</title>
        <authorList>
            <person name="Harhay G.P."/>
            <person name="Sonstegard T.S."/>
            <person name="Keele J.W."/>
            <person name="Heaton M.P."/>
            <person name="Clawson M.L."/>
            <person name="Snelling W.M."/>
            <person name="Wiedmann R.T."/>
            <person name="Van Tassell C.P."/>
            <person name="Smith T.P.L."/>
        </authorList>
    </citation>
    <scope>NUCLEOTIDE SEQUENCE [LARGE SCALE MRNA]</scope>
</reference>
<reference key="2">
    <citation type="submission" date="2006-08" db="EMBL/GenBank/DDBJ databases">
        <authorList>
            <consortium name="NIH - Mammalian Gene Collection (MGC) project"/>
        </authorList>
    </citation>
    <scope>NUCLEOTIDE SEQUENCE [LARGE SCALE MRNA]</scope>
    <source>
        <strain>Hereford</strain>
        <tissue>Fetal skin</tissue>
    </source>
</reference>
<dbReference type="EC" id="2.3.1.-" evidence="2"/>
<dbReference type="EC" id="2.3.1.24" evidence="2"/>
<dbReference type="EMBL" id="BT020828">
    <property type="protein sequence ID" value="AAX08845.1"/>
    <property type="molecule type" value="mRNA"/>
</dbReference>
<dbReference type="EMBL" id="BT020854">
    <property type="protein sequence ID" value="AAX08871.1"/>
    <property type="molecule type" value="mRNA"/>
</dbReference>
<dbReference type="EMBL" id="BT026335">
    <property type="protein sequence ID" value="ABG81491.1"/>
    <property type="molecule type" value="mRNA"/>
</dbReference>
<dbReference type="EMBL" id="BC120450">
    <property type="protein sequence ID" value="AAI20451.1"/>
    <property type="molecule type" value="mRNA"/>
</dbReference>
<dbReference type="RefSeq" id="NP_001015520.1">
    <property type="nucleotide sequence ID" value="NM_001015520.1"/>
</dbReference>
<dbReference type="RefSeq" id="XP_005208907.1">
    <property type="nucleotide sequence ID" value="XM_005208850.4"/>
</dbReference>
<dbReference type="RefSeq" id="XP_010805210.1">
    <property type="nucleotide sequence ID" value="XM_010806908.2"/>
</dbReference>
<dbReference type="SMR" id="Q5E9R6"/>
<dbReference type="FunCoup" id="Q5E9R6">
    <property type="interactions" value="959"/>
</dbReference>
<dbReference type="STRING" id="9913.ENSBTAP00000004459"/>
<dbReference type="GlyCosmos" id="Q5E9R6">
    <property type="glycosylation" value="1 site, No reported glycans"/>
</dbReference>
<dbReference type="GlyGen" id="Q5E9R6">
    <property type="glycosylation" value="1 site"/>
</dbReference>
<dbReference type="PaxDb" id="9913-ENSBTAP00000004459"/>
<dbReference type="Ensembl" id="ENSBTAT00000004459.4">
    <property type="protein sequence ID" value="ENSBTAP00000004459.2"/>
    <property type="gene ID" value="ENSBTAG00000003434.4"/>
</dbReference>
<dbReference type="GeneID" id="505233"/>
<dbReference type="KEGG" id="bta:505233"/>
<dbReference type="CTD" id="79603"/>
<dbReference type="VEuPathDB" id="HostDB:ENSBTAG00000003434"/>
<dbReference type="VGNC" id="VGNC:27226">
    <property type="gene designation" value="CERS4"/>
</dbReference>
<dbReference type="eggNOG" id="KOG1607">
    <property type="taxonomic scope" value="Eukaryota"/>
</dbReference>
<dbReference type="GeneTree" id="ENSGT01030000234515"/>
<dbReference type="HOGENOM" id="CLU_028277_1_1_1"/>
<dbReference type="InParanoid" id="Q5E9R6"/>
<dbReference type="OMA" id="YYSMELY"/>
<dbReference type="OrthoDB" id="537032at2759"/>
<dbReference type="TreeFam" id="TF314319"/>
<dbReference type="Reactome" id="R-BTA-1660661">
    <property type="pathway name" value="Sphingolipid de novo biosynthesis"/>
</dbReference>
<dbReference type="UniPathway" id="UPA00222"/>
<dbReference type="Proteomes" id="UP000009136">
    <property type="component" value="Chromosome 7"/>
</dbReference>
<dbReference type="Bgee" id="ENSBTAG00000003434">
    <property type="expression patterns" value="Expressed in retina and 100 other cell types or tissues"/>
</dbReference>
<dbReference type="GO" id="GO:0005789">
    <property type="term" value="C:endoplasmic reticulum membrane"/>
    <property type="evidence" value="ECO:0007669"/>
    <property type="project" value="UniProtKB-SubCell"/>
</dbReference>
<dbReference type="GO" id="GO:0003677">
    <property type="term" value="F:DNA binding"/>
    <property type="evidence" value="ECO:0007669"/>
    <property type="project" value="InterPro"/>
</dbReference>
<dbReference type="GO" id="GO:0050291">
    <property type="term" value="F:sphingosine N-acyltransferase activity"/>
    <property type="evidence" value="ECO:0000250"/>
    <property type="project" value="UniProtKB"/>
</dbReference>
<dbReference type="GO" id="GO:0046513">
    <property type="term" value="P:ceramide biosynthetic process"/>
    <property type="evidence" value="ECO:0000250"/>
    <property type="project" value="UniProtKB"/>
</dbReference>
<dbReference type="CDD" id="cd00086">
    <property type="entry name" value="homeodomain"/>
    <property type="match status" value="1"/>
</dbReference>
<dbReference type="FunFam" id="1.10.10.60:FF:000020">
    <property type="entry name" value="Ceramide synthase 5"/>
    <property type="match status" value="1"/>
</dbReference>
<dbReference type="Gene3D" id="1.10.10.60">
    <property type="entry name" value="Homeodomain-like"/>
    <property type="match status" value="1"/>
</dbReference>
<dbReference type="InterPro" id="IPR001356">
    <property type="entry name" value="HD"/>
</dbReference>
<dbReference type="InterPro" id="IPR009057">
    <property type="entry name" value="Homeodomain-like_sf"/>
</dbReference>
<dbReference type="InterPro" id="IPR016439">
    <property type="entry name" value="Lag1/Lac1-like"/>
</dbReference>
<dbReference type="InterPro" id="IPR006634">
    <property type="entry name" value="TLC-dom"/>
</dbReference>
<dbReference type="PANTHER" id="PTHR12560:SF6">
    <property type="entry name" value="CERAMIDE SYNTHASE 4"/>
    <property type="match status" value="1"/>
</dbReference>
<dbReference type="PANTHER" id="PTHR12560">
    <property type="entry name" value="LONGEVITY ASSURANCE FACTOR 1 LAG1"/>
    <property type="match status" value="1"/>
</dbReference>
<dbReference type="Pfam" id="PF00046">
    <property type="entry name" value="Homeodomain"/>
    <property type="match status" value="1"/>
</dbReference>
<dbReference type="Pfam" id="PF03798">
    <property type="entry name" value="TRAM_LAG1_CLN8"/>
    <property type="match status" value="1"/>
</dbReference>
<dbReference type="PIRSF" id="PIRSF005225">
    <property type="entry name" value="LAG1_LAC1"/>
    <property type="match status" value="1"/>
</dbReference>
<dbReference type="SMART" id="SM00724">
    <property type="entry name" value="TLC"/>
    <property type="match status" value="1"/>
</dbReference>
<dbReference type="SUPFAM" id="SSF46689">
    <property type="entry name" value="Homeodomain-like"/>
    <property type="match status" value="1"/>
</dbReference>
<dbReference type="PROSITE" id="PS50922">
    <property type="entry name" value="TLC"/>
    <property type="match status" value="1"/>
</dbReference>
<keyword id="KW-0256">Endoplasmic reticulum</keyword>
<keyword id="KW-0325">Glycoprotein</keyword>
<keyword id="KW-0444">Lipid biosynthesis</keyword>
<keyword id="KW-0443">Lipid metabolism</keyword>
<keyword id="KW-0472">Membrane</keyword>
<keyword id="KW-0597">Phosphoprotein</keyword>
<keyword id="KW-1185">Reference proteome</keyword>
<keyword id="KW-0808">Transferase</keyword>
<keyword id="KW-0812">Transmembrane</keyword>
<keyword id="KW-1133">Transmembrane helix</keyword>
<accession>Q5E9R6</accession>
<accession>Q0V884</accession>
<protein>
    <recommendedName>
        <fullName evidence="2">Ceramide synthase 4</fullName>
        <shortName evidence="2">CerS4</shortName>
        <ecNumber evidence="2">2.3.1.-</ecNumber>
    </recommendedName>
    <alternativeName>
        <fullName evidence="2">LAG1 longevity assurance homolog 4</fullName>
    </alternativeName>
    <alternativeName>
        <fullName evidence="6">Sphingosine N-acyltransferase CERS4</fullName>
        <ecNumber evidence="2">2.3.1.24</ecNumber>
    </alternativeName>
</protein>
<sequence length="393" mass="46363">MWSSLNDWLWNERLWLPANISWAQLEDHDGLVFPHPQDTLMAVPLALALVVVRFTFERFVALPLSRWLGVRNQIRRPADPNATLEKHYLMKGREPTESQMNLLATQCGLTLRQTQCWFRRRRNQDRPCLTKKFCESSWKFVFYLCCFVCGTMVLYHESWLWTPVKCWENYPHQPLKPGLYHWYLLELSFYISLLMTLPFDTKRKDFKEQVIHHFVTIILISFSYSLNLLRIGSLVLLLHDSADYLLEASKLFNYMHWRRMCDTLFIIFSLVFFYTRLVLFPTRILYTTFFESIGNFSPFFGYYFLNILLVILQLLHVFWSWLILCMIYSFIKKGQMEKDVRSDVEELDSSDGEAAEECPQMKNGAAQRPGAAPTDGPRSRAAGRMVNRHTPAT</sequence>
<proteinExistence type="evidence at transcript level"/>
<name>CERS4_BOVIN</name>
<organism>
    <name type="scientific">Bos taurus</name>
    <name type="common">Bovine</name>
    <dbReference type="NCBI Taxonomy" id="9913"/>
    <lineage>
        <taxon>Eukaryota</taxon>
        <taxon>Metazoa</taxon>
        <taxon>Chordata</taxon>
        <taxon>Craniata</taxon>
        <taxon>Vertebrata</taxon>
        <taxon>Euteleostomi</taxon>
        <taxon>Mammalia</taxon>
        <taxon>Eutheria</taxon>
        <taxon>Laurasiatheria</taxon>
        <taxon>Artiodactyla</taxon>
        <taxon>Ruminantia</taxon>
        <taxon>Pecora</taxon>
        <taxon>Bovidae</taxon>
        <taxon>Bovinae</taxon>
        <taxon>Bos</taxon>
    </lineage>
</organism>